<accession>Q9D2L1</accession>
<accession>Q6PE11</accession>
<accession>Q8BL50</accession>
<accession>Q8BUA1</accession>
<accession>Q9CYZ0</accession>
<name>ARSK_MOUSE</name>
<evidence type="ECO:0000250" key="1">
    <source>
        <dbReference type="UniProtKB" id="P15289"/>
    </source>
</evidence>
<evidence type="ECO:0000250" key="2">
    <source>
        <dbReference type="UniProtKB" id="Q6UWY0"/>
    </source>
</evidence>
<evidence type="ECO:0000255" key="3"/>
<evidence type="ECO:0000256" key="4">
    <source>
        <dbReference type="SAM" id="MobiDB-lite"/>
    </source>
</evidence>
<evidence type="ECO:0000269" key="5">
    <source>
    </source>
</evidence>
<evidence type="ECO:0000305" key="6"/>
<organism>
    <name type="scientific">Mus musculus</name>
    <name type="common">Mouse</name>
    <dbReference type="NCBI Taxonomy" id="10090"/>
    <lineage>
        <taxon>Eukaryota</taxon>
        <taxon>Metazoa</taxon>
        <taxon>Chordata</taxon>
        <taxon>Craniata</taxon>
        <taxon>Vertebrata</taxon>
        <taxon>Euteleostomi</taxon>
        <taxon>Mammalia</taxon>
        <taxon>Eutheria</taxon>
        <taxon>Euarchontoglires</taxon>
        <taxon>Glires</taxon>
        <taxon>Rodentia</taxon>
        <taxon>Myomorpha</taxon>
        <taxon>Muroidea</taxon>
        <taxon>Muridae</taxon>
        <taxon>Murinae</taxon>
        <taxon>Mus</taxon>
        <taxon>Mus</taxon>
    </lineage>
</organism>
<feature type="signal peptide" evidence="3">
    <location>
        <begin position="1"/>
        <end position="16"/>
    </location>
</feature>
<feature type="chain" id="PRO_0000356286" description="Arylsulfatase K">
    <location>
        <begin position="17"/>
        <end position="553"/>
    </location>
</feature>
<feature type="region of interest" description="Disordered" evidence="4">
    <location>
        <begin position="530"/>
        <end position="553"/>
    </location>
</feature>
<feature type="compositionally biased region" description="Low complexity" evidence="4">
    <location>
        <begin position="534"/>
        <end position="553"/>
    </location>
</feature>
<feature type="active site" description="Nucleophile" evidence="1">
    <location>
        <position position="80"/>
    </location>
</feature>
<feature type="binding site" evidence="1">
    <location>
        <position position="40"/>
    </location>
    <ligand>
        <name>Ca(2+)</name>
        <dbReference type="ChEBI" id="CHEBI:29108"/>
    </ligand>
</feature>
<feature type="binding site" description="via 3-oxoalanine" evidence="1">
    <location>
        <position position="80"/>
    </location>
    <ligand>
        <name>Ca(2+)</name>
        <dbReference type="ChEBI" id="CHEBI:29108"/>
    </ligand>
</feature>
<feature type="binding site" evidence="1">
    <location>
        <position position="128"/>
    </location>
    <ligand>
        <name>substrate</name>
    </ligand>
</feature>
<feature type="binding site" evidence="1">
    <location>
        <position position="249"/>
    </location>
    <ligand>
        <name>substrate</name>
    </ligand>
</feature>
<feature type="binding site" evidence="1">
    <location>
        <position position="311"/>
    </location>
    <ligand>
        <name>Ca(2+)</name>
        <dbReference type="ChEBI" id="CHEBI:29108"/>
    </ligand>
</feature>
<feature type="binding site" evidence="1">
    <location>
        <position position="312"/>
    </location>
    <ligand>
        <name>Ca(2+)</name>
        <dbReference type="ChEBI" id="CHEBI:29108"/>
    </ligand>
</feature>
<feature type="modified residue" description="3-oxoalanine (Cys)" evidence="2">
    <location>
        <position position="80"/>
    </location>
</feature>
<feature type="glycosylation site" description="N-linked (GlcNAc...) asparagine" evidence="3">
    <location>
        <position position="108"/>
    </location>
</feature>
<feature type="glycosylation site" description="N-linked (GlcNAc...) asparagine" evidence="3">
    <location>
        <position position="191"/>
    </location>
</feature>
<feature type="glycosylation site" description="N-linked (GlcNAc...) asparagine" evidence="3">
    <location>
        <position position="260"/>
    </location>
</feature>
<feature type="glycosylation site" description="N-linked (GlcNAc...) asparagine" evidence="3">
    <location>
        <position position="373"/>
    </location>
</feature>
<feature type="glycosylation site" description="N-linked (GlcNAc...) asparagine" evidence="3">
    <location>
        <position position="411"/>
    </location>
</feature>
<feature type="glycosylation site" description="N-linked (GlcNAc...) asparagine" evidence="3">
    <location>
        <position position="496"/>
    </location>
</feature>
<feature type="sequence conflict" description="In Ref. 1; BAC39714." evidence="6" ref="1">
    <original>Y</original>
    <variation>H</variation>
    <location>
        <position position="481"/>
    </location>
</feature>
<protein>
    <recommendedName>
        <fullName>Arylsulfatase K</fullName>
        <shortName>ASK</shortName>
        <ecNumber evidence="2">3.1.6.1</ecNumber>
    </recommendedName>
    <alternativeName>
        <fullName>Glucuronate-2-sulfatase</fullName>
        <ecNumber evidence="5">3.1.6.18</ecNumber>
    </alternativeName>
</protein>
<gene>
    <name type="primary">Arsk</name>
</gene>
<dbReference type="EC" id="3.1.6.1" evidence="2"/>
<dbReference type="EC" id="3.1.6.18" evidence="5"/>
<dbReference type="EMBL" id="AK046378">
    <property type="protein sequence ID" value="BAC32696.1"/>
    <property type="status" value="ALT_INIT"/>
    <property type="molecule type" value="mRNA"/>
</dbReference>
<dbReference type="EMBL" id="AK013194">
    <property type="protein sequence ID" value="BAB28703.1"/>
    <property type="status" value="ALT_SEQ"/>
    <property type="molecule type" value="mRNA"/>
</dbReference>
<dbReference type="EMBL" id="AK086667">
    <property type="protein sequence ID" value="BAC39714.1"/>
    <property type="status" value="ALT_INIT"/>
    <property type="molecule type" value="mRNA"/>
</dbReference>
<dbReference type="EMBL" id="AK019515">
    <property type="protein sequence ID" value="BAB31772.1"/>
    <property type="status" value="ALT_INIT"/>
    <property type="molecule type" value="mRNA"/>
</dbReference>
<dbReference type="EMBL" id="AK031147">
    <property type="protein sequence ID" value="BAC27279.1"/>
    <property type="status" value="ALT_INIT"/>
    <property type="molecule type" value="mRNA"/>
</dbReference>
<dbReference type="EMBL" id="AK032812">
    <property type="protein sequence ID" value="BAC28035.1"/>
    <property type="status" value="ALT_INIT"/>
    <property type="molecule type" value="mRNA"/>
</dbReference>
<dbReference type="EMBL" id="AK035464">
    <property type="protein sequence ID" value="BAC29070.1"/>
    <property type="status" value="ALT_INIT"/>
    <property type="molecule type" value="mRNA"/>
</dbReference>
<dbReference type="EMBL" id="AK039765">
    <property type="protein sequence ID" value="BAC30444.1"/>
    <property type="status" value="ALT_INIT"/>
    <property type="molecule type" value="mRNA"/>
</dbReference>
<dbReference type="EMBL" id="AK083188">
    <property type="protein sequence ID" value="BAC38801.1"/>
    <property type="status" value="ALT_INIT"/>
    <property type="molecule type" value="mRNA"/>
</dbReference>
<dbReference type="EMBL" id="AK084090">
    <property type="protein sequence ID" value="BAC39115.1"/>
    <property type="status" value="ALT_INIT"/>
    <property type="molecule type" value="mRNA"/>
</dbReference>
<dbReference type="EMBL" id="AK144817">
    <property type="protein sequence ID" value="BAE26079.1"/>
    <property type="status" value="ALT_INIT"/>
    <property type="molecule type" value="mRNA"/>
</dbReference>
<dbReference type="EMBL" id="AK165970">
    <property type="protein sequence ID" value="BAE38491.1"/>
    <property type="status" value="ALT_INIT"/>
    <property type="molecule type" value="mRNA"/>
</dbReference>
<dbReference type="EMBL" id="BC046790">
    <property type="protein sequence ID" value="AAH46790.3"/>
    <property type="status" value="ALT_INIT"/>
    <property type="molecule type" value="mRNA"/>
</dbReference>
<dbReference type="EMBL" id="BC058351">
    <property type="protein sequence ID" value="AAH58351.3"/>
    <property type="status" value="ALT_INIT"/>
    <property type="molecule type" value="mRNA"/>
</dbReference>
<dbReference type="EMBL" id="BN000751">
    <property type="protein sequence ID" value="CAI84997.1"/>
    <property type="status" value="ALT_INIT"/>
    <property type="molecule type" value="mRNA"/>
</dbReference>
<dbReference type="CCDS" id="CCDS49315.1"/>
<dbReference type="RefSeq" id="NP_084123.3">
    <property type="nucleotide sequence ID" value="NM_029847.5"/>
</dbReference>
<dbReference type="SMR" id="Q9D2L1"/>
<dbReference type="BioGRID" id="218477">
    <property type="interactions" value="2"/>
</dbReference>
<dbReference type="FunCoup" id="Q9D2L1">
    <property type="interactions" value="324"/>
</dbReference>
<dbReference type="STRING" id="10090.ENSMUSP00000113274"/>
<dbReference type="GlyCosmos" id="Q9D2L1">
    <property type="glycosylation" value="6 sites, No reported glycans"/>
</dbReference>
<dbReference type="GlyGen" id="Q9D2L1">
    <property type="glycosylation" value="6 sites, 1 N-linked glycan (1 site)"/>
</dbReference>
<dbReference type="PhosphoSitePlus" id="Q9D2L1"/>
<dbReference type="PaxDb" id="10090-ENSMUSP00000113274"/>
<dbReference type="ProteomicsDB" id="283177"/>
<dbReference type="Antibodypedia" id="25008">
    <property type="antibodies" value="112 antibodies from 23 providers"/>
</dbReference>
<dbReference type="DNASU" id="77041"/>
<dbReference type="Ensembl" id="ENSMUST00000239063.2">
    <property type="protein sequence ID" value="ENSMUSP00000158928.2"/>
    <property type="gene ID" value="ENSMUSG00000021592.19"/>
</dbReference>
<dbReference type="GeneID" id="77041"/>
<dbReference type="KEGG" id="mmu:77041"/>
<dbReference type="UCSC" id="uc007rgh.1">
    <property type="organism name" value="mouse"/>
</dbReference>
<dbReference type="AGR" id="MGI:1924291"/>
<dbReference type="CTD" id="153642"/>
<dbReference type="MGI" id="MGI:1924291">
    <property type="gene designation" value="Arsk"/>
</dbReference>
<dbReference type="VEuPathDB" id="HostDB:ENSMUSG00000021592"/>
<dbReference type="eggNOG" id="KOG3731">
    <property type="taxonomic scope" value="Eukaryota"/>
</dbReference>
<dbReference type="GeneTree" id="ENSGT00940000158982"/>
<dbReference type="InParanoid" id="Q9D2L1"/>
<dbReference type="OrthoDB" id="1886626at2759"/>
<dbReference type="PhylomeDB" id="Q9D2L1"/>
<dbReference type="TreeFam" id="TF313545"/>
<dbReference type="Reactome" id="R-MMU-1663150">
    <property type="pathway name" value="The activation of arylsulfatases"/>
</dbReference>
<dbReference type="Reactome" id="R-MMU-9840310">
    <property type="pathway name" value="Glycosphingolipid catabolism"/>
</dbReference>
<dbReference type="BioGRID-ORCS" id="77041">
    <property type="hits" value="5 hits in 79 CRISPR screens"/>
</dbReference>
<dbReference type="PRO" id="PR:Q9D2L1"/>
<dbReference type="Proteomes" id="UP000000589">
    <property type="component" value="Chromosome 13"/>
</dbReference>
<dbReference type="RNAct" id="Q9D2L1">
    <property type="molecule type" value="protein"/>
</dbReference>
<dbReference type="Bgee" id="ENSMUSG00000021592">
    <property type="expression patterns" value="Expressed in ciliary body and 204 other cell types or tissues"/>
</dbReference>
<dbReference type="ExpressionAtlas" id="Q9D2L1">
    <property type="expression patterns" value="baseline and differential"/>
</dbReference>
<dbReference type="GO" id="GO:0005576">
    <property type="term" value="C:extracellular region"/>
    <property type="evidence" value="ECO:0007669"/>
    <property type="project" value="UniProtKB-SubCell"/>
</dbReference>
<dbReference type="GO" id="GO:0005764">
    <property type="term" value="C:lysosome"/>
    <property type="evidence" value="ECO:0007669"/>
    <property type="project" value="UniProtKB-SubCell"/>
</dbReference>
<dbReference type="GO" id="GO:0004065">
    <property type="term" value="F:arylsulfatase activity"/>
    <property type="evidence" value="ECO:0007669"/>
    <property type="project" value="RHEA"/>
</dbReference>
<dbReference type="GO" id="GO:0015024">
    <property type="term" value="F:glucuronate-2-sulfatase activity"/>
    <property type="evidence" value="ECO:0000315"/>
    <property type="project" value="UniProtKB"/>
</dbReference>
<dbReference type="GO" id="GO:0046872">
    <property type="term" value="F:metal ion binding"/>
    <property type="evidence" value="ECO:0007669"/>
    <property type="project" value="UniProtKB-KW"/>
</dbReference>
<dbReference type="CDD" id="cd16171">
    <property type="entry name" value="ARSK"/>
    <property type="match status" value="1"/>
</dbReference>
<dbReference type="FunFam" id="3.40.720.10:FF:000039">
    <property type="entry name" value="arylsulfatase K"/>
    <property type="match status" value="1"/>
</dbReference>
<dbReference type="Gene3D" id="3.40.720.10">
    <property type="entry name" value="Alkaline Phosphatase, subunit A"/>
    <property type="match status" value="1"/>
</dbReference>
<dbReference type="InterPro" id="IPR017850">
    <property type="entry name" value="Alkaline_phosphatase_core_sf"/>
</dbReference>
<dbReference type="InterPro" id="IPR047892">
    <property type="entry name" value="ARSK"/>
</dbReference>
<dbReference type="InterPro" id="IPR051849">
    <property type="entry name" value="GAG-degrading_sulfatase"/>
</dbReference>
<dbReference type="InterPro" id="IPR000917">
    <property type="entry name" value="Sulfatase_N"/>
</dbReference>
<dbReference type="PANTHER" id="PTHR46615">
    <property type="entry name" value="ARYLSULFATASE K"/>
    <property type="match status" value="1"/>
</dbReference>
<dbReference type="PANTHER" id="PTHR46615:SF1">
    <property type="entry name" value="ARYLSULFATASE K"/>
    <property type="match status" value="1"/>
</dbReference>
<dbReference type="Pfam" id="PF00884">
    <property type="entry name" value="Sulfatase"/>
    <property type="match status" value="1"/>
</dbReference>
<dbReference type="SUPFAM" id="SSF53649">
    <property type="entry name" value="Alkaline phosphatase-like"/>
    <property type="match status" value="1"/>
</dbReference>
<comment type="function">
    <text evidence="2 5">Catalyzes the hydrolysis of pseudosubstrates such as p-nitrocatechol sulfate and p-nitrophenyl sulfate (By similarity). Catalyzes the hydrolysis of the 2-sulfate groups of the 2-O-sulfo-D-glucuronate residues of chondroitin sulfate, heparin and heparitin sulfate (PubMed:32856704). Acts selectively on 2-sulfoglucuronate and lacks activity against 2-sulfoiduronate (By similarity).</text>
</comment>
<comment type="catalytic activity">
    <reaction evidence="2">
        <text>an aryl sulfate + H2O = a phenol + sulfate + H(+)</text>
        <dbReference type="Rhea" id="RHEA:17261"/>
        <dbReference type="ChEBI" id="CHEBI:15377"/>
        <dbReference type="ChEBI" id="CHEBI:15378"/>
        <dbReference type="ChEBI" id="CHEBI:16189"/>
        <dbReference type="ChEBI" id="CHEBI:33853"/>
        <dbReference type="ChEBI" id="CHEBI:140317"/>
        <dbReference type="EC" id="3.1.6.1"/>
    </reaction>
</comment>
<comment type="catalytic activity">
    <reaction evidence="5">
        <text>Hydrolysis of the 2-sulfate groups of the 2-O-sulfo-D-glucuronate residues of chondroitin sulfate, heparin and heparitin sulfate.</text>
        <dbReference type="EC" id="3.1.6.18"/>
    </reaction>
</comment>
<comment type="cofactor">
    <cofactor evidence="1">
        <name>Ca(2+)</name>
        <dbReference type="ChEBI" id="CHEBI:29108"/>
    </cofactor>
    <text evidence="1">Binds 1 Ca(2+) ion per subunit.</text>
</comment>
<comment type="subcellular location">
    <subcellularLocation>
        <location evidence="2">Secreted</location>
    </subcellularLocation>
    <subcellularLocation>
        <location evidence="2">Lysosome</location>
    </subcellularLocation>
</comment>
<comment type="PTM">
    <text evidence="2">The conversion to 3-oxoalanine (also known as C-formylglycine, FGly), of a serine or cysteine residue in prokaryotes and of a cysteine residue in eukaryotes, is critical for catalytic activity.</text>
</comment>
<comment type="PTM">
    <text evidence="2">The 75-kDa precursor undergoes proteolytic processing to yield a 23 kDa form.</text>
</comment>
<comment type="PTM">
    <text evidence="2">N-glycosylated with both high mannose and complex type sugars.</text>
</comment>
<comment type="disruption phenotype">
    <text evidence="5">Mice accumulate significant amounts of heparan sulfate, which exhibits glucuronate-2-O-sulfated non-reducing ends, particularly in brain and kidney.</text>
</comment>
<comment type="similarity">
    <text evidence="6">Belongs to the sulfatase family.</text>
</comment>
<comment type="sequence caution" evidence="6">
    <conflict type="erroneous initiation">
        <sequence resource="EMBL-CDS" id="AAH46790"/>
    </conflict>
    <text>Truncated N-terminus.</text>
</comment>
<comment type="sequence caution" evidence="6">
    <conflict type="erroneous initiation">
        <sequence resource="EMBL-CDS" id="AAH58351"/>
    </conflict>
    <text>Truncated N-terminus.</text>
</comment>
<comment type="sequence caution" evidence="6">
    <conflict type="erroneous initiation">
        <sequence resource="EMBL-CDS" id="BAB28703"/>
    </conflict>
    <text>Truncated N-terminus.</text>
</comment>
<comment type="sequence caution" evidence="6">
    <conflict type="frameshift">
        <sequence resource="EMBL-CDS" id="BAB28703"/>
    </conflict>
</comment>
<comment type="sequence caution" evidence="6">
    <conflict type="erroneous initiation">
        <sequence resource="EMBL-CDS" id="BAB31772"/>
    </conflict>
    <text>Truncated N-terminus.</text>
</comment>
<comment type="sequence caution" evidence="6">
    <conflict type="erroneous initiation">
        <sequence resource="EMBL-CDS" id="BAC27279"/>
    </conflict>
    <text>Truncated N-terminus.</text>
</comment>
<comment type="sequence caution" evidence="6">
    <conflict type="erroneous initiation">
        <sequence resource="EMBL-CDS" id="BAC28035"/>
    </conflict>
    <text>Truncated N-terminus.</text>
</comment>
<comment type="sequence caution" evidence="6">
    <conflict type="erroneous initiation">
        <sequence resource="EMBL-CDS" id="BAC29070"/>
    </conflict>
    <text>Truncated N-terminus.</text>
</comment>
<comment type="sequence caution" evidence="6">
    <conflict type="erroneous initiation">
        <sequence resource="EMBL-CDS" id="BAC30444"/>
    </conflict>
    <text>Truncated N-terminus.</text>
</comment>
<comment type="sequence caution" evidence="6">
    <conflict type="erroneous initiation">
        <sequence resource="EMBL-CDS" id="BAC32696"/>
    </conflict>
    <text>Truncated N-terminus.</text>
</comment>
<comment type="sequence caution" evidence="6">
    <conflict type="erroneous initiation">
        <sequence resource="EMBL-CDS" id="BAC38801"/>
    </conflict>
    <text>Truncated N-terminus.</text>
</comment>
<comment type="sequence caution" evidence="6">
    <conflict type="erroneous initiation">
        <sequence resource="EMBL-CDS" id="BAC39115"/>
    </conflict>
    <text>Truncated N-terminus.</text>
</comment>
<comment type="sequence caution" evidence="6">
    <conflict type="erroneous initiation">
        <sequence resource="EMBL-CDS" id="BAC39714"/>
    </conflict>
    <text>Truncated N-terminus.</text>
</comment>
<comment type="sequence caution" evidence="6">
    <conflict type="erroneous initiation">
        <sequence resource="EMBL-CDS" id="BAE26079"/>
    </conflict>
    <text>Truncated N-terminus.</text>
</comment>
<comment type="sequence caution" evidence="6">
    <conflict type="erroneous initiation">
        <sequence resource="EMBL-CDS" id="BAE38491"/>
    </conflict>
    <text>Truncated N-terminus.</text>
</comment>
<comment type="sequence caution" evidence="6">
    <conflict type="erroneous initiation">
        <sequence resource="EMBL-CDS" id="CAI84997"/>
    </conflict>
    <text>Truncated N-terminus.</text>
</comment>
<keyword id="KW-0106">Calcium</keyword>
<keyword id="KW-0325">Glycoprotein</keyword>
<keyword id="KW-0378">Hydrolase</keyword>
<keyword id="KW-0458">Lysosome</keyword>
<keyword id="KW-0479">Metal-binding</keyword>
<keyword id="KW-1185">Reference proteome</keyword>
<keyword id="KW-0964">Secreted</keyword>
<keyword id="KW-0732">Signal</keyword>
<sequence>MLLLLVSVVAALALAAPAPRTQKKRMQVNQAPNVVLVASDSFDGRLTFQPGSQVVKLPFINFMRAHGTTFLNAYTNSPICCPSRAAMWSGLFTHLTESWNNFKGLDPNYTTWMDIMEKHGYQTQKFGKVDYTSGHHSISNRVEAWTRDVAFLLRQEGRPIINLIPDKNRRRVMTKDWQNTDKAIEWLRQVNYTKPFVLYLGLNLPHPYPSPSSGENFGSSTFHTSLYWLEKVAYDAIKIPKWLTLSQMHPVDFYSSYTKNCTGKFTENEIKNIRAFYYAMCAETDAMLGEIILALHKLDLLQKTIVIYTSDHGEMAMEHRQFYKMSMYEASVHVPLLMMGPGIKANLQVPSVVSLVDIYPTMLDIAGIALPPNLSGYSLLTLLSNASANEQAFKFHRPPWILSEFHGCNANASTYMLRTGQWKYIAYADGASVQPQLFDLSLDPDELTNIATEFPEITYSLDQKLRSIVNYPKVSASVHQYNKEQFIMWKQSVGQNYSNVIAHLRWHQDWQRDPRKYENAIQHWLTAHSSPLASSPTQSTSGSQPTLPQSTSG</sequence>
<proteinExistence type="evidence at protein level"/>
<reference key="1">
    <citation type="journal article" date="2005" name="Science">
        <title>The transcriptional landscape of the mammalian genome.</title>
        <authorList>
            <person name="Carninci P."/>
            <person name="Kasukawa T."/>
            <person name="Katayama S."/>
            <person name="Gough J."/>
            <person name="Frith M.C."/>
            <person name="Maeda N."/>
            <person name="Oyama R."/>
            <person name="Ravasi T."/>
            <person name="Lenhard B."/>
            <person name="Wells C."/>
            <person name="Kodzius R."/>
            <person name="Shimokawa K."/>
            <person name="Bajic V.B."/>
            <person name="Brenner S.E."/>
            <person name="Batalov S."/>
            <person name="Forrest A.R."/>
            <person name="Zavolan M."/>
            <person name="Davis M.J."/>
            <person name="Wilming L.G."/>
            <person name="Aidinis V."/>
            <person name="Allen J.E."/>
            <person name="Ambesi-Impiombato A."/>
            <person name="Apweiler R."/>
            <person name="Aturaliya R.N."/>
            <person name="Bailey T.L."/>
            <person name="Bansal M."/>
            <person name="Baxter L."/>
            <person name="Beisel K.W."/>
            <person name="Bersano T."/>
            <person name="Bono H."/>
            <person name="Chalk A.M."/>
            <person name="Chiu K.P."/>
            <person name="Choudhary V."/>
            <person name="Christoffels A."/>
            <person name="Clutterbuck D.R."/>
            <person name="Crowe M.L."/>
            <person name="Dalla E."/>
            <person name="Dalrymple B.P."/>
            <person name="de Bono B."/>
            <person name="Della Gatta G."/>
            <person name="di Bernardo D."/>
            <person name="Down T."/>
            <person name="Engstrom P."/>
            <person name="Fagiolini M."/>
            <person name="Faulkner G."/>
            <person name="Fletcher C.F."/>
            <person name="Fukushima T."/>
            <person name="Furuno M."/>
            <person name="Futaki S."/>
            <person name="Gariboldi M."/>
            <person name="Georgii-Hemming P."/>
            <person name="Gingeras T.R."/>
            <person name="Gojobori T."/>
            <person name="Green R.E."/>
            <person name="Gustincich S."/>
            <person name="Harbers M."/>
            <person name="Hayashi Y."/>
            <person name="Hensch T.K."/>
            <person name="Hirokawa N."/>
            <person name="Hill D."/>
            <person name="Huminiecki L."/>
            <person name="Iacono M."/>
            <person name="Ikeo K."/>
            <person name="Iwama A."/>
            <person name="Ishikawa T."/>
            <person name="Jakt M."/>
            <person name="Kanapin A."/>
            <person name="Katoh M."/>
            <person name="Kawasawa Y."/>
            <person name="Kelso J."/>
            <person name="Kitamura H."/>
            <person name="Kitano H."/>
            <person name="Kollias G."/>
            <person name="Krishnan S.P."/>
            <person name="Kruger A."/>
            <person name="Kummerfeld S.K."/>
            <person name="Kurochkin I.V."/>
            <person name="Lareau L.F."/>
            <person name="Lazarevic D."/>
            <person name="Lipovich L."/>
            <person name="Liu J."/>
            <person name="Liuni S."/>
            <person name="McWilliam S."/>
            <person name="Madan Babu M."/>
            <person name="Madera M."/>
            <person name="Marchionni L."/>
            <person name="Matsuda H."/>
            <person name="Matsuzawa S."/>
            <person name="Miki H."/>
            <person name="Mignone F."/>
            <person name="Miyake S."/>
            <person name="Morris K."/>
            <person name="Mottagui-Tabar S."/>
            <person name="Mulder N."/>
            <person name="Nakano N."/>
            <person name="Nakauchi H."/>
            <person name="Ng P."/>
            <person name="Nilsson R."/>
            <person name="Nishiguchi S."/>
            <person name="Nishikawa S."/>
            <person name="Nori F."/>
            <person name="Ohara O."/>
            <person name="Okazaki Y."/>
            <person name="Orlando V."/>
            <person name="Pang K.C."/>
            <person name="Pavan W.J."/>
            <person name="Pavesi G."/>
            <person name="Pesole G."/>
            <person name="Petrovsky N."/>
            <person name="Piazza S."/>
            <person name="Reed J."/>
            <person name="Reid J.F."/>
            <person name="Ring B.Z."/>
            <person name="Ringwald M."/>
            <person name="Rost B."/>
            <person name="Ruan Y."/>
            <person name="Salzberg S.L."/>
            <person name="Sandelin A."/>
            <person name="Schneider C."/>
            <person name="Schoenbach C."/>
            <person name="Sekiguchi K."/>
            <person name="Semple C.A."/>
            <person name="Seno S."/>
            <person name="Sessa L."/>
            <person name="Sheng Y."/>
            <person name="Shibata Y."/>
            <person name="Shimada H."/>
            <person name="Shimada K."/>
            <person name="Silva D."/>
            <person name="Sinclair B."/>
            <person name="Sperling S."/>
            <person name="Stupka E."/>
            <person name="Sugiura K."/>
            <person name="Sultana R."/>
            <person name="Takenaka Y."/>
            <person name="Taki K."/>
            <person name="Tammoja K."/>
            <person name="Tan S.L."/>
            <person name="Tang S."/>
            <person name="Taylor M.S."/>
            <person name="Tegner J."/>
            <person name="Teichmann S.A."/>
            <person name="Ueda H.R."/>
            <person name="van Nimwegen E."/>
            <person name="Verardo R."/>
            <person name="Wei C.L."/>
            <person name="Yagi K."/>
            <person name="Yamanishi H."/>
            <person name="Zabarovsky E."/>
            <person name="Zhu S."/>
            <person name="Zimmer A."/>
            <person name="Hide W."/>
            <person name="Bult C."/>
            <person name="Grimmond S.M."/>
            <person name="Teasdale R.D."/>
            <person name="Liu E.T."/>
            <person name="Brusic V."/>
            <person name="Quackenbush J."/>
            <person name="Wahlestedt C."/>
            <person name="Mattick J.S."/>
            <person name="Hume D.A."/>
            <person name="Kai C."/>
            <person name="Sasaki D."/>
            <person name="Tomaru Y."/>
            <person name="Fukuda S."/>
            <person name="Kanamori-Katayama M."/>
            <person name="Suzuki M."/>
            <person name="Aoki J."/>
            <person name="Arakawa T."/>
            <person name="Iida J."/>
            <person name="Imamura K."/>
            <person name="Itoh M."/>
            <person name="Kato T."/>
            <person name="Kawaji H."/>
            <person name="Kawagashira N."/>
            <person name="Kawashima T."/>
            <person name="Kojima M."/>
            <person name="Kondo S."/>
            <person name="Konno H."/>
            <person name="Nakano K."/>
            <person name="Ninomiya N."/>
            <person name="Nishio T."/>
            <person name="Okada M."/>
            <person name="Plessy C."/>
            <person name="Shibata K."/>
            <person name="Shiraki T."/>
            <person name="Suzuki S."/>
            <person name="Tagami M."/>
            <person name="Waki K."/>
            <person name="Watahiki A."/>
            <person name="Okamura-Oho Y."/>
            <person name="Suzuki H."/>
            <person name="Kawai J."/>
            <person name="Hayashizaki Y."/>
        </authorList>
    </citation>
    <scope>NUCLEOTIDE SEQUENCE [LARGE SCALE MRNA]</scope>
    <source>
        <strain>C57BL/6J</strain>
        <tissue>Corpora quadrigemina</tissue>
        <tissue>Forelimb</tissue>
        <tissue>Head</tissue>
        <tissue>Hippocampus</tissue>
        <tissue>Lung</tissue>
        <tissue>Spinal cord</tissue>
        <tissue>Spinal ganglion</tissue>
        <tissue>Urinary bladder</tissue>
    </source>
</reference>
<reference key="2">
    <citation type="journal article" date="2004" name="Genome Res.">
        <title>The status, quality, and expansion of the NIH full-length cDNA project: the Mammalian Gene Collection (MGC).</title>
        <authorList>
            <consortium name="The MGC Project Team"/>
        </authorList>
    </citation>
    <scope>NUCLEOTIDE SEQUENCE [LARGE SCALE MRNA]</scope>
    <source>
        <strain>C57BL/6J</strain>
        <tissue>Brain</tissue>
    </source>
</reference>
<reference key="3">
    <citation type="journal article" date="2005" name="Hum. Mol. Genet.">
        <title>Sulfatases and sulfatase modifying factors: an exclusive and promiscuous relationship.</title>
        <authorList>
            <person name="Sardiello M."/>
            <person name="Annunziata I."/>
            <person name="Roma G."/>
            <person name="Ballabio A."/>
        </authorList>
    </citation>
    <scope>IDENTIFICATION</scope>
</reference>
<reference key="4">
    <citation type="journal article" date="2020" name="Biochem. J.">
        <title>Arylsulfatase K inactivation causes mucopolysaccharidosis due to deficient glucuronate desulfation of heparan and chondroitin sulfate.</title>
        <authorList>
            <person name="Trabszo C."/>
            <person name="Ramms B."/>
            <person name="Chopra P."/>
            <person name="Luellmann-Rauch R."/>
            <person name="Stroobants S."/>
            <person name="Spross J."/>
            <person name="Jeschke A."/>
            <person name="Schinke T."/>
            <person name="Boons G.J."/>
            <person name="Esko J.D."/>
            <person name="Luebke T."/>
            <person name="Dierks T."/>
        </authorList>
    </citation>
    <scope>FUNCTION</scope>
    <scope>CATALYTIC ACTIVITY</scope>
    <scope>DISRUPTION PHENOTYPE</scope>
</reference>